<dbReference type="EC" id="2.5.1.39" evidence="1"/>
<dbReference type="EMBL" id="FM178379">
    <property type="protein sequence ID" value="CAQ80579.1"/>
    <property type="molecule type" value="Genomic_DNA"/>
</dbReference>
<dbReference type="RefSeq" id="WP_012551313.1">
    <property type="nucleotide sequence ID" value="NC_011312.1"/>
</dbReference>
<dbReference type="SMR" id="B6ENU2"/>
<dbReference type="KEGG" id="vsa:VSAL_I2895"/>
<dbReference type="eggNOG" id="COG0382">
    <property type="taxonomic scope" value="Bacteria"/>
</dbReference>
<dbReference type="HOGENOM" id="CLU_034879_1_0_6"/>
<dbReference type="UniPathway" id="UPA00232"/>
<dbReference type="Proteomes" id="UP000001730">
    <property type="component" value="Chromosome 1"/>
</dbReference>
<dbReference type="GO" id="GO:0005886">
    <property type="term" value="C:plasma membrane"/>
    <property type="evidence" value="ECO:0007669"/>
    <property type="project" value="UniProtKB-SubCell"/>
</dbReference>
<dbReference type="GO" id="GO:0008412">
    <property type="term" value="F:4-hydroxybenzoate polyprenyltransferase activity"/>
    <property type="evidence" value="ECO:0007669"/>
    <property type="project" value="UniProtKB-UniRule"/>
</dbReference>
<dbReference type="GO" id="GO:0006744">
    <property type="term" value="P:ubiquinone biosynthetic process"/>
    <property type="evidence" value="ECO:0007669"/>
    <property type="project" value="UniProtKB-UniRule"/>
</dbReference>
<dbReference type="CDD" id="cd13959">
    <property type="entry name" value="PT_UbiA_COQ2"/>
    <property type="match status" value="1"/>
</dbReference>
<dbReference type="FunFam" id="1.10.357.140:FF:000002">
    <property type="entry name" value="4-hydroxybenzoate octaprenyltransferase"/>
    <property type="match status" value="1"/>
</dbReference>
<dbReference type="FunFam" id="1.20.120.1780:FF:000001">
    <property type="entry name" value="4-hydroxybenzoate octaprenyltransferase"/>
    <property type="match status" value="1"/>
</dbReference>
<dbReference type="Gene3D" id="1.10.357.140">
    <property type="entry name" value="UbiA prenyltransferase"/>
    <property type="match status" value="1"/>
</dbReference>
<dbReference type="Gene3D" id="1.20.120.1780">
    <property type="entry name" value="UbiA prenyltransferase"/>
    <property type="match status" value="1"/>
</dbReference>
<dbReference type="HAMAP" id="MF_01635">
    <property type="entry name" value="UbiA"/>
    <property type="match status" value="1"/>
</dbReference>
<dbReference type="InterPro" id="IPR006370">
    <property type="entry name" value="HB_polyprenyltransferase-like"/>
</dbReference>
<dbReference type="InterPro" id="IPR039653">
    <property type="entry name" value="Prenyltransferase"/>
</dbReference>
<dbReference type="InterPro" id="IPR000537">
    <property type="entry name" value="UbiA_prenyltransferase"/>
</dbReference>
<dbReference type="InterPro" id="IPR044878">
    <property type="entry name" value="UbiA_sf"/>
</dbReference>
<dbReference type="NCBIfam" id="TIGR01474">
    <property type="entry name" value="ubiA_proteo"/>
    <property type="match status" value="1"/>
</dbReference>
<dbReference type="PANTHER" id="PTHR11048:SF28">
    <property type="entry name" value="4-HYDROXYBENZOATE POLYPRENYLTRANSFERASE, MITOCHONDRIAL"/>
    <property type="match status" value="1"/>
</dbReference>
<dbReference type="PANTHER" id="PTHR11048">
    <property type="entry name" value="PRENYLTRANSFERASES"/>
    <property type="match status" value="1"/>
</dbReference>
<dbReference type="Pfam" id="PF01040">
    <property type="entry name" value="UbiA"/>
    <property type="match status" value="1"/>
</dbReference>
<gene>
    <name evidence="1" type="primary">ubiA</name>
    <name type="ordered locus">VSAL_I2895</name>
</gene>
<reference key="1">
    <citation type="journal article" date="2008" name="BMC Genomics">
        <title>The genome sequence of the fish pathogen Aliivibrio salmonicida strain LFI1238 shows extensive evidence of gene decay.</title>
        <authorList>
            <person name="Hjerde E."/>
            <person name="Lorentzen M.S."/>
            <person name="Holden M.T."/>
            <person name="Seeger K."/>
            <person name="Paulsen S."/>
            <person name="Bason N."/>
            <person name="Churcher C."/>
            <person name="Harris D."/>
            <person name="Norbertczak H."/>
            <person name="Quail M.A."/>
            <person name="Sanders S."/>
            <person name="Thurston S."/>
            <person name="Parkhill J."/>
            <person name="Willassen N.P."/>
            <person name="Thomson N.R."/>
        </authorList>
    </citation>
    <scope>NUCLEOTIDE SEQUENCE [LARGE SCALE GENOMIC DNA]</scope>
    <source>
        <strain>LFI1238</strain>
    </source>
</reference>
<proteinExistence type="inferred from homology"/>
<sequence length="285" mass="31679">MTLSKAKAFWQLTRMNRPIGSLLLLWPTLWALFLAADGIPDWHVLIVFILGVVFMRSAGCVINDFADRKVDGHVKRTANRPLPSGLVSSKEALILFSVLVTCSFILVLTMNTLTIMLSSIGVLLAIAYPFMKRITYLPQFVLGLAFSWAIPMAYAAESNQVPPEAWLLFVINAVWTIAYDTQYAMVDRDDDLNIGIKSTAILFGRFDKLMIGLLQLTVLTLLIALGIQLSLPSLYNWGVLAAAGCFVYQQWLIKGREREACFEAFLNNNYVGGFIFVAISASVLI</sequence>
<evidence type="ECO:0000255" key="1">
    <source>
        <dbReference type="HAMAP-Rule" id="MF_01635"/>
    </source>
</evidence>
<organism>
    <name type="scientific">Aliivibrio salmonicida (strain LFI1238)</name>
    <name type="common">Vibrio salmonicida (strain LFI1238)</name>
    <dbReference type="NCBI Taxonomy" id="316275"/>
    <lineage>
        <taxon>Bacteria</taxon>
        <taxon>Pseudomonadati</taxon>
        <taxon>Pseudomonadota</taxon>
        <taxon>Gammaproteobacteria</taxon>
        <taxon>Vibrionales</taxon>
        <taxon>Vibrionaceae</taxon>
        <taxon>Aliivibrio</taxon>
    </lineage>
</organism>
<feature type="chain" id="PRO_1000186654" description="4-hydroxybenzoate octaprenyltransferase">
    <location>
        <begin position="1"/>
        <end position="285"/>
    </location>
</feature>
<feature type="transmembrane region" description="Helical" evidence="1">
    <location>
        <begin position="33"/>
        <end position="53"/>
    </location>
</feature>
<feature type="transmembrane region" description="Helical" evidence="1">
    <location>
        <begin position="93"/>
        <end position="113"/>
    </location>
</feature>
<feature type="transmembrane region" description="Helical" evidence="1">
    <location>
        <begin position="134"/>
        <end position="154"/>
    </location>
</feature>
<feature type="transmembrane region" description="Helical" evidence="1">
    <location>
        <begin position="166"/>
        <end position="186"/>
    </location>
</feature>
<feature type="transmembrane region" description="Helical" evidence="1">
    <location>
        <begin position="209"/>
        <end position="229"/>
    </location>
</feature>
<feature type="transmembrane region" description="Helical" evidence="1">
    <location>
        <begin position="233"/>
        <end position="253"/>
    </location>
</feature>
<feature type="transmembrane region" description="Helical" evidence="1">
    <location>
        <begin position="265"/>
        <end position="285"/>
    </location>
</feature>
<name>UBIA_ALISL</name>
<comment type="function">
    <text evidence="1">Catalyzes the prenylation of para-hydroxybenzoate (PHB) with an all-trans polyprenyl group. Mediates the second step in the final reaction sequence of ubiquinone-8 (UQ-8) biosynthesis, which is the condensation of the polyisoprenoid side chain with PHB, generating the first membrane-bound Q intermediate 3-octaprenyl-4-hydroxybenzoate.</text>
</comment>
<comment type="catalytic activity">
    <reaction evidence="1">
        <text>all-trans-octaprenyl diphosphate + 4-hydroxybenzoate = 4-hydroxy-3-(all-trans-octaprenyl)benzoate + diphosphate</text>
        <dbReference type="Rhea" id="RHEA:27782"/>
        <dbReference type="ChEBI" id="CHEBI:1617"/>
        <dbReference type="ChEBI" id="CHEBI:17879"/>
        <dbReference type="ChEBI" id="CHEBI:33019"/>
        <dbReference type="ChEBI" id="CHEBI:57711"/>
        <dbReference type="EC" id="2.5.1.39"/>
    </reaction>
</comment>
<comment type="cofactor">
    <cofactor evidence="1">
        <name>Mg(2+)</name>
        <dbReference type="ChEBI" id="CHEBI:18420"/>
    </cofactor>
</comment>
<comment type="pathway">
    <text evidence="1">Cofactor biosynthesis; ubiquinone biosynthesis.</text>
</comment>
<comment type="subcellular location">
    <subcellularLocation>
        <location evidence="1">Cell inner membrane</location>
        <topology evidence="1">Multi-pass membrane protein</topology>
    </subcellularLocation>
</comment>
<comment type="similarity">
    <text evidence="1">Belongs to the UbiA prenyltransferase family.</text>
</comment>
<keyword id="KW-0997">Cell inner membrane</keyword>
<keyword id="KW-1003">Cell membrane</keyword>
<keyword id="KW-0460">Magnesium</keyword>
<keyword id="KW-0472">Membrane</keyword>
<keyword id="KW-0808">Transferase</keyword>
<keyword id="KW-0812">Transmembrane</keyword>
<keyword id="KW-1133">Transmembrane helix</keyword>
<keyword id="KW-0831">Ubiquinone biosynthesis</keyword>
<accession>B6ENU2</accession>
<protein>
    <recommendedName>
        <fullName evidence="1">4-hydroxybenzoate octaprenyltransferase</fullName>
        <ecNumber evidence="1">2.5.1.39</ecNumber>
    </recommendedName>
    <alternativeName>
        <fullName evidence="1">4-HB polyprenyltransferase</fullName>
    </alternativeName>
</protein>